<evidence type="ECO:0000250" key="1">
    <source>
        <dbReference type="UniProtKB" id="Q86U44"/>
    </source>
</evidence>
<evidence type="ECO:0000255" key="2">
    <source>
        <dbReference type="PROSITE-ProRule" id="PRU00489"/>
    </source>
</evidence>
<evidence type="ECO:0000256" key="3">
    <source>
        <dbReference type="SAM" id="MobiDB-lite"/>
    </source>
</evidence>
<evidence type="ECO:0000269" key="4">
    <source>
    </source>
</evidence>
<evidence type="ECO:0000269" key="5">
    <source>
    </source>
</evidence>
<evidence type="ECO:0000269" key="6">
    <source>
    </source>
</evidence>
<evidence type="ECO:0000269" key="7">
    <source>
    </source>
</evidence>
<evidence type="ECO:0000269" key="8">
    <source>
    </source>
</evidence>
<evidence type="ECO:0000269" key="9">
    <source>
    </source>
</evidence>
<evidence type="ECO:0000269" key="10">
    <source>
    </source>
</evidence>
<evidence type="ECO:0000269" key="11">
    <source>
    </source>
</evidence>
<evidence type="ECO:0000269" key="12">
    <source>
    </source>
</evidence>
<evidence type="ECO:0000269" key="13">
    <source>
    </source>
</evidence>
<evidence type="ECO:0000269" key="14">
    <source>
    </source>
</evidence>
<evidence type="ECO:0000269" key="15">
    <source>
    </source>
</evidence>
<evidence type="ECO:0000269" key="16">
    <source>
    </source>
</evidence>
<evidence type="ECO:0000269" key="17">
    <source>
    </source>
</evidence>
<evidence type="ECO:0000303" key="18">
    <source>
    </source>
</evidence>
<evidence type="ECO:0000305" key="19"/>
<evidence type="ECO:0000312" key="20">
    <source>
        <dbReference type="MGI" id="MGI:1927165"/>
    </source>
</evidence>
<evidence type="ECO:0007744" key="21">
    <source>
    </source>
</evidence>
<feature type="initiator methionine" description="Removed" evidence="1">
    <location>
        <position position="1"/>
    </location>
</feature>
<feature type="chain" id="PRO_0000207631" description="N(6)-adenosine-methyltransferase catalytic subunit METTL3">
    <location>
        <begin position="2"/>
        <end position="580"/>
    </location>
</feature>
<feature type="region of interest" description="Disordered" evidence="3">
    <location>
        <begin position="1"/>
        <end position="70"/>
    </location>
</feature>
<feature type="region of interest" description="Disordered" evidence="3">
    <location>
        <begin position="198"/>
        <end position="217"/>
    </location>
</feature>
<feature type="region of interest" description="Gate loop 1" evidence="1">
    <location>
        <begin position="396"/>
        <end position="410"/>
    </location>
</feature>
<feature type="region of interest" description="Interaction with METTL14" evidence="1">
    <location>
        <begin position="450"/>
        <end position="454"/>
    </location>
</feature>
<feature type="region of interest" description="Interphase loop" evidence="1">
    <location>
        <begin position="462"/>
        <end position="479"/>
    </location>
</feature>
<feature type="region of interest" description="Interaction with METTL14" evidence="1">
    <location>
        <begin position="464"/>
        <end position="480"/>
    </location>
</feature>
<feature type="region of interest" description="Positively charged region required for RNA-binding" evidence="1">
    <location>
        <begin position="465"/>
        <end position="478"/>
    </location>
</feature>
<feature type="region of interest" description="Gate loop 2" evidence="1">
    <location>
        <begin position="507"/>
        <end position="515"/>
    </location>
</feature>
<feature type="short sequence motif" description="Nuclear localization signal" evidence="1">
    <location>
        <begin position="210"/>
        <end position="215"/>
    </location>
</feature>
<feature type="compositionally biased region" description="Basic and acidic residues" evidence="3">
    <location>
        <begin position="28"/>
        <end position="37"/>
    </location>
</feature>
<feature type="compositionally biased region" description="Low complexity" evidence="3">
    <location>
        <begin position="55"/>
        <end position="67"/>
    </location>
</feature>
<feature type="binding site" evidence="1">
    <location>
        <begin position="377"/>
        <end position="378"/>
    </location>
    <ligand>
        <name>S-adenosyl-L-methionine</name>
        <dbReference type="ChEBI" id="CHEBI:59789"/>
    </ligand>
</feature>
<feature type="binding site" evidence="1">
    <location>
        <position position="395"/>
    </location>
    <ligand>
        <name>S-adenosyl-L-methionine</name>
        <dbReference type="ChEBI" id="CHEBI:59789"/>
    </ligand>
</feature>
<feature type="binding site" evidence="1">
    <location>
        <position position="513"/>
    </location>
    <ligand>
        <name>S-adenosyl-L-methionine</name>
        <dbReference type="ChEBI" id="CHEBI:59789"/>
    </ligand>
</feature>
<feature type="binding site" evidence="1">
    <location>
        <begin position="536"/>
        <end position="539"/>
    </location>
    <ligand>
        <name>S-adenosyl-L-methionine</name>
        <dbReference type="ChEBI" id="CHEBI:59789"/>
    </ligand>
</feature>
<feature type="binding site" evidence="1">
    <location>
        <begin position="549"/>
        <end position="550"/>
    </location>
    <ligand>
        <name>S-adenosyl-L-methionine</name>
        <dbReference type="ChEBI" id="CHEBI:59789"/>
    </ligand>
</feature>
<feature type="site" description="Interaction with METTL14" evidence="1">
    <location>
        <position position="438"/>
    </location>
</feature>
<feature type="site" description="Interaction with METTL14" evidence="1">
    <location>
        <position position="441"/>
    </location>
</feature>
<feature type="modified residue" description="N-acetylserine; alternate" evidence="1">
    <location>
        <position position="2"/>
    </location>
</feature>
<feature type="modified residue" description="Phosphoserine; alternate" evidence="1">
    <location>
        <position position="2"/>
    </location>
</feature>
<feature type="modified residue" description="Phosphoserine" evidence="1">
    <location>
        <position position="43"/>
    </location>
</feature>
<feature type="modified residue" description="Phosphoserine" evidence="1">
    <location>
        <position position="48"/>
    </location>
</feature>
<feature type="modified residue" description="Phosphoserine" evidence="1">
    <location>
        <position position="50"/>
    </location>
</feature>
<feature type="modified residue" description="Phosphoserine" evidence="21">
    <location>
        <position position="219"/>
    </location>
</feature>
<feature type="modified residue" description="Phosphoserine" evidence="1">
    <location>
        <position position="243"/>
    </location>
</feature>
<feature type="modified residue" description="Phosphoserine" evidence="1">
    <location>
        <position position="350"/>
    </location>
</feature>
<feature type="cross-link" description="Glycyl lysine isopeptide (Lys-Gly) (interchain with G-Cter in SUMO1)" evidence="1">
    <location>
        <position position="177"/>
    </location>
</feature>
<feature type="cross-link" description="Glycyl lysine isopeptide (Lys-Gly) (interchain with G-Cter in SUMO1)" evidence="1">
    <location>
        <position position="211"/>
    </location>
</feature>
<feature type="cross-link" description="Glycyl lysine isopeptide (Lys-Gly) (interchain with G-Cter in SUMO1)" evidence="1">
    <location>
        <position position="212"/>
    </location>
</feature>
<feature type="cross-link" description="Glycyl lysine isopeptide (Lys-Gly) (interchain with G-Cter in SUMO1)" evidence="1">
    <location>
        <position position="215"/>
    </location>
</feature>
<feature type="splice variant" id="VSP_007867" description="In isoform 2." evidence="18">
    <location>
        <begin position="34"/>
        <end position="106"/>
    </location>
</feature>
<feature type="splice variant" id="VSP_007868" description="In isoform 2." evidence="18">
    <location>
        <begin position="241"/>
        <end position="299"/>
    </location>
</feature>
<feature type="mutagenesis site" description="Loss of activity." evidence="4 10">
    <original>DPPW</original>
    <variation>APPA</variation>
    <location>
        <begin position="395"/>
        <end position="398"/>
    </location>
</feature>
<feature type="sequence conflict" description="In Ref. 2; AAD33673 and 3; BAC39385." evidence="19" ref="2 3">
    <original>D</original>
    <variation>E</variation>
    <location>
        <position position="162"/>
    </location>
</feature>
<feature type="sequence conflict" description="In Ref. 3; BAB26322." evidence="19" ref="3">
    <original>R</original>
    <variation>P</variation>
    <location>
        <position position="471"/>
    </location>
</feature>
<feature type="sequence conflict" description="In Ref. 3; BAB26322." evidence="19" ref="3">
    <original>W</original>
    <variation>L</variation>
    <location>
        <position position="475"/>
    </location>
</feature>
<accession>Q8C3P7</accession>
<accession>Q9CV54</accession>
<accession>Q9ERS9</accession>
<accession>Q9WUI4</accession>
<name>MTA70_MOUSE</name>
<gene>
    <name evidence="20" type="primary">Mettl3</name>
    <name type="synonym">Mta70</name>
</gene>
<dbReference type="EC" id="2.1.1.348" evidence="5"/>
<dbReference type="EMBL" id="AF283992">
    <property type="protein sequence ID" value="AAG13957.1"/>
    <property type="molecule type" value="Genomic_DNA"/>
</dbReference>
<dbReference type="EMBL" id="AF135789">
    <property type="protein sequence ID" value="AAD33673.1"/>
    <property type="molecule type" value="mRNA"/>
</dbReference>
<dbReference type="EMBL" id="AK009492">
    <property type="protein sequence ID" value="BAB26322.1"/>
    <property type="molecule type" value="mRNA"/>
</dbReference>
<dbReference type="EMBL" id="AK085189">
    <property type="protein sequence ID" value="BAC39385.1"/>
    <property type="molecule type" value="mRNA"/>
</dbReference>
<dbReference type="EMBL" id="BC012526">
    <property type="protein sequence ID" value="AAH12526.1"/>
    <property type="molecule type" value="mRNA"/>
</dbReference>
<dbReference type="CCDS" id="CCDS27053.1">
    <molecule id="Q8C3P7-1"/>
</dbReference>
<dbReference type="RefSeq" id="NP_062695.2">
    <property type="nucleotide sequence ID" value="NM_019721.2"/>
</dbReference>
<dbReference type="SMR" id="Q8C3P7"/>
<dbReference type="BioGRID" id="207910">
    <property type="interactions" value="4"/>
</dbReference>
<dbReference type="ComplexPortal" id="CPX-1609">
    <property type="entry name" value="WMM N6-adenosine-methyltransferase complex"/>
</dbReference>
<dbReference type="CORUM" id="Q8C3P7"/>
<dbReference type="DIP" id="DIP-60724N"/>
<dbReference type="FunCoup" id="Q8C3P7">
    <property type="interactions" value="3139"/>
</dbReference>
<dbReference type="IntAct" id="Q8C3P7">
    <property type="interactions" value="1"/>
</dbReference>
<dbReference type="STRING" id="10090.ENSMUSP00000022767"/>
<dbReference type="iPTMnet" id="Q8C3P7"/>
<dbReference type="PhosphoSitePlus" id="Q8C3P7"/>
<dbReference type="SwissPalm" id="Q8C3P7"/>
<dbReference type="jPOST" id="Q8C3P7"/>
<dbReference type="PaxDb" id="10090-ENSMUSP00000022767"/>
<dbReference type="PeptideAtlas" id="Q8C3P7"/>
<dbReference type="ProteomicsDB" id="291357">
    <molecule id="Q8C3P7-1"/>
</dbReference>
<dbReference type="ProteomicsDB" id="291358">
    <molecule id="Q8C3P7-2"/>
</dbReference>
<dbReference type="Pumba" id="Q8C3P7"/>
<dbReference type="DNASU" id="56335"/>
<dbReference type="GeneID" id="56335"/>
<dbReference type="KEGG" id="mmu:56335"/>
<dbReference type="UCSC" id="uc007tpc.1">
    <molecule id="Q8C3P7-1"/>
    <property type="organism name" value="mouse"/>
</dbReference>
<dbReference type="AGR" id="MGI:1927165"/>
<dbReference type="CTD" id="56339"/>
<dbReference type="MGI" id="MGI:1927165">
    <property type="gene designation" value="Mettl3"/>
</dbReference>
<dbReference type="eggNOG" id="KOG2098">
    <property type="taxonomic scope" value="Eukaryota"/>
</dbReference>
<dbReference type="InParanoid" id="Q8C3P7"/>
<dbReference type="OrthoDB" id="10262526at2759"/>
<dbReference type="PhylomeDB" id="Q8C3P7"/>
<dbReference type="TreeFam" id="TF323854"/>
<dbReference type="BRENDA" id="2.1.1.348">
    <property type="organism ID" value="3474"/>
</dbReference>
<dbReference type="Reactome" id="R-MMU-72203">
    <property type="pathway name" value="Processing of Capped Intron-Containing Pre-mRNA"/>
</dbReference>
<dbReference type="BioGRID-ORCS" id="56335">
    <property type="hits" value="28 hits in 79 CRISPR screens"/>
</dbReference>
<dbReference type="ChiTaRS" id="Mettl3">
    <property type="organism name" value="mouse"/>
</dbReference>
<dbReference type="PRO" id="PR:Q8C3P7"/>
<dbReference type="Proteomes" id="UP000000589">
    <property type="component" value="Unplaced"/>
</dbReference>
<dbReference type="RNAct" id="Q8C3P7">
    <property type="molecule type" value="protein"/>
</dbReference>
<dbReference type="GO" id="GO:0005737">
    <property type="term" value="C:cytoplasm"/>
    <property type="evidence" value="ECO:0007669"/>
    <property type="project" value="UniProtKB-SubCell"/>
</dbReference>
<dbReference type="GO" id="GO:0016607">
    <property type="term" value="C:nuclear speck"/>
    <property type="evidence" value="ECO:0000250"/>
    <property type="project" value="UniProtKB"/>
</dbReference>
<dbReference type="GO" id="GO:0005634">
    <property type="term" value="C:nucleus"/>
    <property type="evidence" value="ECO:0000314"/>
    <property type="project" value="UniProtKB"/>
</dbReference>
<dbReference type="GO" id="GO:0036396">
    <property type="term" value="C:RNA N6-methyladenosine methyltransferase complex"/>
    <property type="evidence" value="ECO:0000314"/>
    <property type="project" value="UniProtKB"/>
</dbReference>
<dbReference type="GO" id="GO:0003729">
    <property type="term" value="F:mRNA binding"/>
    <property type="evidence" value="ECO:0000250"/>
    <property type="project" value="UniProtKB"/>
</dbReference>
<dbReference type="GO" id="GO:0001734">
    <property type="term" value="F:mRNA m(6)A methyltransferase activity"/>
    <property type="evidence" value="ECO:0000314"/>
    <property type="project" value="UniProtKB"/>
</dbReference>
<dbReference type="GO" id="GO:0046982">
    <property type="term" value="F:protein heterodimerization activity"/>
    <property type="evidence" value="ECO:0000250"/>
    <property type="project" value="UniProtKB"/>
</dbReference>
<dbReference type="GO" id="GO:1904047">
    <property type="term" value="F:S-adenosyl-L-methionine binding"/>
    <property type="evidence" value="ECO:0000250"/>
    <property type="project" value="UniProtKB"/>
</dbReference>
<dbReference type="GO" id="GO:0034644">
    <property type="term" value="P:cellular response to UV"/>
    <property type="evidence" value="ECO:0000250"/>
    <property type="project" value="UniProtKB"/>
</dbReference>
<dbReference type="GO" id="GO:0007623">
    <property type="term" value="P:circadian rhythm"/>
    <property type="evidence" value="ECO:0000315"/>
    <property type="project" value="UniProtKB"/>
</dbReference>
<dbReference type="GO" id="GO:0006974">
    <property type="term" value="P:DNA damage response"/>
    <property type="evidence" value="ECO:0000250"/>
    <property type="project" value="UniProtKB"/>
</dbReference>
<dbReference type="GO" id="GO:0009048">
    <property type="term" value="P:dosage compensation by inactivation of X chromosome"/>
    <property type="evidence" value="ECO:0000250"/>
    <property type="project" value="UniProtKB"/>
</dbReference>
<dbReference type="GO" id="GO:0098508">
    <property type="term" value="P:endothelial to hematopoietic transition"/>
    <property type="evidence" value="ECO:0000250"/>
    <property type="project" value="UniProtKB"/>
</dbReference>
<dbReference type="GO" id="GO:0021861">
    <property type="term" value="P:forebrain radial glial cell differentiation"/>
    <property type="evidence" value="ECO:0000315"/>
    <property type="project" value="UniProtKB"/>
</dbReference>
<dbReference type="GO" id="GO:0042063">
    <property type="term" value="P:gliogenesis"/>
    <property type="evidence" value="ECO:0000315"/>
    <property type="project" value="UniProtKB"/>
</dbReference>
<dbReference type="GO" id="GO:0045087">
    <property type="term" value="P:innate immune response"/>
    <property type="evidence" value="ECO:0007669"/>
    <property type="project" value="UniProtKB-KW"/>
</dbReference>
<dbReference type="GO" id="GO:0006402">
    <property type="term" value="P:mRNA catabolic process"/>
    <property type="evidence" value="ECO:0000315"/>
    <property type="project" value="UniProtKB"/>
</dbReference>
<dbReference type="GO" id="GO:0061157">
    <property type="term" value="P:mRNA destabilization"/>
    <property type="evidence" value="ECO:0000315"/>
    <property type="project" value="UniProtKB"/>
</dbReference>
<dbReference type="GO" id="GO:0016556">
    <property type="term" value="P:mRNA modification"/>
    <property type="evidence" value="ECO:0000314"/>
    <property type="project" value="UniProt"/>
</dbReference>
<dbReference type="GO" id="GO:0006397">
    <property type="term" value="P:mRNA processing"/>
    <property type="evidence" value="ECO:0000314"/>
    <property type="project" value="UniProtKB"/>
</dbReference>
<dbReference type="GO" id="GO:0000398">
    <property type="term" value="P:mRNA splicing, via spliceosome"/>
    <property type="evidence" value="ECO:0000315"/>
    <property type="project" value="UniProtKB"/>
</dbReference>
<dbReference type="GO" id="GO:0045746">
    <property type="term" value="P:negative regulation of Notch signaling pathway"/>
    <property type="evidence" value="ECO:0000250"/>
    <property type="project" value="UniProtKB"/>
</dbReference>
<dbReference type="GO" id="GO:0060339">
    <property type="term" value="P:negative regulation of type I interferon-mediated signaling pathway"/>
    <property type="evidence" value="ECO:0000250"/>
    <property type="project" value="UniProtKB"/>
</dbReference>
<dbReference type="GO" id="GO:0048477">
    <property type="term" value="P:oogenesis"/>
    <property type="evidence" value="ECO:0000315"/>
    <property type="project" value="UniProtKB"/>
</dbReference>
<dbReference type="GO" id="GO:1903679">
    <property type="term" value="P:positive regulation of cap-independent translational initiation"/>
    <property type="evidence" value="ECO:0000250"/>
    <property type="project" value="UniProtKB"/>
</dbReference>
<dbReference type="GO" id="GO:0061014">
    <property type="term" value="P:positive regulation of mRNA catabolic process"/>
    <property type="evidence" value="ECO:0000315"/>
    <property type="project" value="FlyBase"/>
</dbReference>
<dbReference type="GO" id="GO:0045727">
    <property type="term" value="P:positive regulation of translation"/>
    <property type="evidence" value="ECO:0000250"/>
    <property type="project" value="UniProtKB"/>
</dbReference>
<dbReference type="GO" id="GO:0031053">
    <property type="term" value="P:primary miRNA processing"/>
    <property type="evidence" value="ECO:0000250"/>
    <property type="project" value="UniProtKB"/>
</dbReference>
<dbReference type="GO" id="GO:1902036">
    <property type="term" value="P:regulation of hematopoietic stem cell differentiation"/>
    <property type="evidence" value="ECO:0000250"/>
    <property type="project" value="UniProtKB"/>
</dbReference>
<dbReference type="GO" id="GO:0051445">
    <property type="term" value="P:regulation of meiotic cell cycle"/>
    <property type="evidence" value="ECO:0000315"/>
    <property type="project" value="UniProtKB"/>
</dbReference>
<dbReference type="GO" id="GO:0045580">
    <property type="term" value="P:regulation of T cell differentiation"/>
    <property type="evidence" value="ECO:0000315"/>
    <property type="project" value="UniProtKB"/>
</dbReference>
<dbReference type="GO" id="GO:0001510">
    <property type="term" value="P:RNA methylation"/>
    <property type="evidence" value="ECO:0000315"/>
    <property type="project" value="UniProtKB"/>
</dbReference>
<dbReference type="GO" id="GO:0007283">
    <property type="term" value="P:spermatogenesis"/>
    <property type="evidence" value="ECO:0000315"/>
    <property type="project" value="UniProtKB"/>
</dbReference>
<dbReference type="GO" id="GO:0019827">
    <property type="term" value="P:stem cell population maintenance"/>
    <property type="evidence" value="ECO:0000315"/>
    <property type="project" value="UniProtKB"/>
</dbReference>
<dbReference type="Gene3D" id="3.40.50.150">
    <property type="entry name" value="Vaccinia Virus protein VP39"/>
    <property type="match status" value="1"/>
</dbReference>
<dbReference type="InterPro" id="IPR025848">
    <property type="entry name" value="MT-A70"/>
</dbReference>
<dbReference type="InterPro" id="IPR007757">
    <property type="entry name" value="MT-A70-like"/>
</dbReference>
<dbReference type="InterPro" id="IPR029063">
    <property type="entry name" value="SAM-dependent_MTases_sf"/>
</dbReference>
<dbReference type="PANTHER" id="PTHR12829">
    <property type="entry name" value="N6-ADENOSINE-METHYLTRANSFERASE"/>
    <property type="match status" value="1"/>
</dbReference>
<dbReference type="PANTHER" id="PTHR12829:SF7">
    <property type="entry name" value="N6-ADENOSINE-METHYLTRANSFERASE CATALYTIC SUBUNIT"/>
    <property type="match status" value="1"/>
</dbReference>
<dbReference type="Pfam" id="PF05063">
    <property type="entry name" value="MT-A70"/>
    <property type="match status" value="1"/>
</dbReference>
<dbReference type="SUPFAM" id="SSF53335">
    <property type="entry name" value="S-adenosyl-L-methionine-dependent methyltransferases"/>
    <property type="match status" value="1"/>
</dbReference>
<dbReference type="PROSITE" id="PS51143">
    <property type="entry name" value="MT_A70"/>
    <property type="match status" value="1"/>
</dbReference>
<dbReference type="PROSITE" id="PS51563">
    <property type="entry name" value="SAM_MTA70L_1"/>
    <property type="match status" value="1"/>
</dbReference>
<comment type="function">
    <text evidence="1 4 5 6 7 9 10 11 12 13 14 17">The METTL3-METTL14 heterodimer forms a N6-methyltransferase complex that methylates adenosine residues at the N(6) position of some RNAs and regulates various processes such as the circadian clock, differentiation of embryonic and hematopoietic stem cells, cortical neurogenesis, response to DNA damage, differentiation of T-cells and primary miRNA processing (PubMed:24394384, PubMed:25456834, PubMed:25569111, PubMed:28792938, PubMed:28809392, PubMed:28869969, PubMed:28965759). In the heterodimer formed with METTL14, METTL3 constitutes the catalytic core (By similarity). N6-methyladenosine (m6A), which takes place at the 5'-[AG]GAC-3' consensus sites of some mRNAs, plays a role in mRNA stability, processing, translation efficiency and editing (By similarity). M6A acts as a key regulator of mRNA stability: methylation is completed upon the release of mRNA into the nucleoplasm and promotes mRNA destabilization and degradation (PubMed:28637692). In embryonic stem cells (ESCs), m6A methylation of mRNAs encoding key naive pluripotency-promoting transcripts results in transcript destabilization, promoting differentiation of ESCs (PubMed:24394384, PubMed:25456834, PubMed:25569111). M6A regulates the length of the circadian clock: acts as an early pace-setter in the circadian loop by putting mRNA production on a fast-track for facilitating nuclear processing, thereby providing an early point of control in setting the dynamics of the feedback loop (PubMed:24209618). M6A also regulates circadian regulation of hepatic lipid metabolism (By similarity). M6A regulates spermatogonial differentiation and meiosis and is essential for male fertility and spermatogenesis (PubMed:28809392, PubMed:28914256, PubMed:32943573). Also required for oogenesis (PubMed:32943573). Involved in the response to DNA damage: in response to ultraviolet irradiation, METTL3 rapidly catalyzes the formation of m6A on poly(A) transcripts at DNA damage sites, leading to the recruitment of POLK to DNA damage sites (By similarity). M6A is also required for T-cell homeostasis and differentiation: m6A methylation of transcripts of SOCS family members (SOCS1, SOCS3 and CISH) in naive T-cells promotes mRNA destabilization and degradation, promoting T-cell differentiation (PubMed:28792938). Inhibits the type I interferon response by mediating m6A methylation of IFNB (By similarity). M6A also regulates cortical neurogenesis: m6A methylation of transcripts related to transcription factors, neural stem cells, the cell cycle and neuronal differentiation during brain development promotes their destabilization and decay, promoting differentiation of radial glial cells (PubMed:28965759). M6A also takes place in other RNA molecules, such as primary miRNA (pri-miRNAs) (By similarity). Mediates m6A methylation of Xist RNA, thereby participating in random X inactivation: m6A methylation of Xist leads to target YTHDC1 reader on Xist and promote transcription repression activity of Xist (By similarity). METTL3 mediates methylation of pri-miRNAs, marking them for recognition and processing by DGCR8 (By similarity). Acts as a positive regulator of mRNA translation independently of the methyltransferase activity: promotes translation by interacting with the translation initiation machinery in the cytoplasm (By similarity).</text>
</comment>
<comment type="catalytic activity">
    <reaction evidence="5">
        <text>an adenosine in mRNA + S-adenosyl-L-methionine = an N(6)-methyladenosine in mRNA + S-adenosyl-L-homocysteine + H(+)</text>
        <dbReference type="Rhea" id="RHEA:55584"/>
        <dbReference type="Rhea" id="RHEA-COMP:12414"/>
        <dbReference type="Rhea" id="RHEA-COMP:12417"/>
        <dbReference type="ChEBI" id="CHEBI:15378"/>
        <dbReference type="ChEBI" id="CHEBI:57856"/>
        <dbReference type="ChEBI" id="CHEBI:59789"/>
        <dbReference type="ChEBI" id="CHEBI:74411"/>
        <dbReference type="ChEBI" id="CHEBI:74449"/>
        <dbReference type="EC" id="2.1.1.348"/>
    </reaction>
</comment>
<comment type="activity regulation">
    <text evidence="1 8">Methyltransferase activity is regulated by miRNAs via a sequence pairing mechanism (PubMed:25683224). Methyltransferase activity is inhibited by sumoylation (By similarity).</text>
</comment>
<comment type="subunit">
    <text evidence="1 15 16">Heterodimer; heterodimerizes with METTL14 to form an antiparallel heterodimer that constitutes an active methyltransferase (By similarity). Component of the WMM complex, a N6-methyltransferase complex composed of a catalytic subcomplex, named MAC, and of an associated subcomplex, named MACOM (PubMed:29535189, PubMed:29547716). The MAC subcomplex is composed of METTL3 and METTL14 (PubMed:29535189, PubMed:29547716). The MACOM subcomplex is composed of WTAP, ZC3H13, CBLL1/HAKAI, VIRMA, and, in some cases of RBM15 (RBM15 or RBM15B) (PubMed:29535189, PubMed:29547716). Interacts with NCBP1/CBP80 (By similarity). Interacts with EIF4E (By similarity). Interacts with EIF3B (By similarity).</text>
</comment>
<comment type="interaction">
    <interactant intactId="EBI-8311763">
        <id>Q8C3P7</id>
    </interactant>
    <interactant intactId="EBI-16089028">
        <id>Q3UIK4</id>
        <label>Mettl14</label>
    </interactant>
    <organismsDiffer>false</organismsDiffer>
    <experiments>2</experiments>
</comment>
<comment type="subcellular location">
    <subcellularLocation>
        <location evidence="13">Nucleus</location>
    </subcellularLocation>
    <subcellularLocation>
        <location evidence="5 8">Nucleus speckle</location>
    </subcellularLocation>
    <subcellularLocation>
        <location evidence="1">Cytoplasm</location>
    </subcellularLocation>
    <text evidence="1 5">Colocalizes with speckles in interphase nuclei. Suggesting that it may be associated with nuclear pre-mRNA splicing components (PubMed:24394384). In response to ultraviolet irradiation, colocalizes to DNA damage sites however, it probably does not bind DNA but localizes in the vicinity of DNA damage site (By similarity).</text>
</comment>
<comment type="alternative products">
    <event type="alternative splicing"/>
    <isoform>
        <id>Q8C3P7-1</id>
        <name>1</name>
        <sequence type="displayed"/>
    </isoform>
    <isoform>
        <id>Q8C3P7-2</id>
        <name>2</name>
        <sequence type="described" ref="VSP_007867 VSP_007868"/>
    </isoform>
</comment>
<comment type="tissue specificity">
    <text evidence="11 13">Present in both germ cells and somatic cells during testis development (at protein level) (PubMed:28809392).</text>
</comment>
<comment type="domain">
    <text evidence="1">Gate loop 1 and gate loop 2 regions are adjacent to the S-adenosyl-L-homocysteine-binding site and display large conformational changes upon ligand-binding. They may play an important role in adenosine recognition. The interface loop contributes to the heterodimer interaction.</text>
</comment>
<comment type="PTM">
    <text evidence="1">Sumoylation inhibits the N6-adenosine-methyltransferase activity. Sumoylation does not affect subcellular location or interaction with METTL14. Desumoylated by SENP1.</text>
</comment>
<comment type="disruption phenotype">
    <text evidence="6 7 10 11 13 14">Embryonic lethality (PubMed:25569111). Blastocysts retain normal morphology and expression of pluripotency markers and yield embryonic stem cells (ESCs) at the expected ratio. However, they fail to adequately terminate their naive state and undergo aberrant and restricted lineage priming at the postimplantation stage, leading to early embryonic lethality (PubMed:25456834, PubMed:25569111). mRNAs show a nearly complete absence of N6-methyladenosine (m6A) methylation (PubMed:25456834, PubMed:25569111). RNAs show defects in splicing and adenosine to inosine editing (PubMed:25569111). Conditional knockout mice lacking Mettl3 in germ cells show male infertility caused by defects in meiosis at the zygotene stage during spermatogenesis (PubMed:28809392). Conditional knockout mice lacking Mettl3 and Mettl14 in germ cells show impaired spermatogenesis (PubMed:28914256). Conditional knockout mice lacking Mettl3 in T-cells show impaired homeostatic expansion of naive T-cells, T-cells remaining in the naive state for up to 12 weeks, thereby preventing colitis (PubMed:28792938). Naive T-cells show loss of m6A modification leading to increased Socs1, Socs3 and Cish mRNA half-life and protein levels, thereby suppressing the IL-7/STAT5 signaling pathway (PubMed:28792938). Conditional knockout mice lacking Mettl3 in the developing nervous system display protracted cell-cycle progression of cortical neural progenitor cells and reduced differentiation of radial glial cells during embryonic cortical neurogenesis (PubMed:28965759).</text>
</comment>
<comment type="similarity">
    <text evidence="2">Belongs to the MT-A70-like family.</text>
</comment>
<comment type="caution">
    <text evidence="5 6 7">While different publications agree on the role of N6-methyladenosine (m6A) on RNA stability and its role in embryonic stem cells (ESCs) pluripotency, the precise function of Mettl3 in ESCs self-renewal is unclear. A first paper reported that Mettl3 promotes self-renewal of ESCs by maintaining the groung state of ESCs (PubMed:24394384). However, opposite conclusions were drawn by publications from other groups (PubMed:25456834, PubMed:25569111). The differences may be explained by different experimental conditions (such as cell types or RNAi off-target effects).</text>
</comment>
<sequence>MSDTWSSIQAHKKQLDSLRERLQRRRKQDSGHLDLRNPEAALSPTFRSDSPVPTAPTSSGPKPSTTSVAPELATDPELEKKLLHHLSDLALTLPTDAVSIRLAISTPDAPATQDGVESLLQKFAAQELIEVKRGLLQDDAHPTLVTYADHSKLSAMMGAVADKKGLGEVAGTIAGQKRRAEQDLTTVTTFASSLASGLASSASEPAKEPAKKSRKHAASDVDLEIESLLNQQSTKEQQSKKVSQEILELLNTTTAKEQSIVEKFRSRGRAQVQEFCDYGTKEECMKASDADRPCRKLHFRRIINKHTDESLGDCSFLNTCFHMDTCKYVHYEIDACVDSESPGSKEHMPSQELALTQSVGGDSSADRLFPPQWICCDIRYLDVSILGKFAVVMADPPWDIHMELPYGTLTDDEMRRLNIPVLQDDGFLFLWVTGRAMELGRECLNLWGYERVDEIIWVKTNQLQRIIRTGRTGHWLNHGKEHCLVGVKGNPQGFNQGLDCDVIVAEVRSTSHKPDEIYGMIERLSPGTRKIELFGRPHNVQPNWITLGNQLDGIHLLDPDVVARFKQRYPDGIISKPKNL</sequence>
<proteinExistence type="evidence at protein level"/>
<protein>
    <recommendedName>
        <fullName>N(6)-adenosine-methyltransferase catalytic subunit METTL3</fullName>
        <ecNumber evidence="5">2.1.1.348</ecNumber>
    </recommendedName>
    <alternativeName>
        <fullName>Methyltransferase-like protein 3</fullName>
    </alternativeName>
    <alternativeName>
        <fullName>N(6)-adenosine-methyltransferase 70 kDa subunit</fullName>
        <shortName>MT-A70</shortName>
    </alternativeName>
</protein>
<reference key="1">
    <citation type="journal article" date="1997" name="RNA">
        <title>Purification and cDNA cloning of the AdoMet-binding subunit of the human mRNA (N6-adenosine)-methyltransferase.</title>
        <authorList>
            <person name="Bokar J.A."/>
            <person name="Shambaugh M.E."/>
            <person name="Polayes D."/>
            <person name="Matera A.G."/>
            <person name="Rottman F.M."/>
        </authorList>
    </citation>
    <scope>NUCLEOTIDE SEQUENCE [GENOMIC DNA] (ISOFORM 1)</scope>
    <source>
        <strain>129/Sv</strain>
    </source>
</reference>
<reference key="2">
    <citation type="journal article" date="2001" name="Mol. Reprod. Dev.">
        <title>Expression of genes involved in mammalian meiosis during the transition from egg to embryo.</title>
        <authorList>
            <person name="Hwang S.-Y."/>
            <person name="Oh B."/>
            <person name="Knowles B.B."/>
            <person name="Solter D."/>
            <person name="Lee J.-S."/>
        </authorList>
    </citation>
    <scope>NUCLEOTIDE SEQUENCE [MRNA] (ISOFORM 2)</scope>
    <source>
        <strain>C57BL/6 X DBA/2</strain>
    </source>
</reference>
<reference key="3">
    <citation type="journal article" date="2005" name="Science">
        <title>The transcriptional landscape of the mammalian genome.</title>
        <authorList>
            <person name="Carninci P."/>
            <person name="Kasukawa T."/>
            <person name="Katayama S."/>
            <person name="Gough J."/>
            <person name="Frith M.C."/>
            <person name="Maeda N."/>
            <person name="Oyama R."/>
            <person name="Ravasi T."/>
            <person name="Lenhard B."/>
            <person name="Wells C."/>
            <person name="Kodzius R."/>
            <person name="Shimokawa K."/>
            <person name="Bajic V.B."/>
            <person name="Brenner S.E."/>
            <person name="Batalov S."/>
            <person name="Forrest A.R."/>
            <person name="Zavolan M."/>
            <person name="Davis M.J."/>
            <person name="Wilming L.G."/>
            <person name="Aidinis V."/>
            <person name="Allen J.E."/>
            <person name="Ambesi-Impiombato A."/>
            <person name="Apweiler R."/>
            <person name="Aturaliya R.N."/>
            <person name="Bailey T.L."/>
            <person name="Bansal M."/>
            <person name="Baxter L."/>
            <person name="Beisel K.W."/>
            <person name="Bersano T."/>
            <person name="Bono H."/>
            <person name="Chalk A.M."/>
            <person name="Chiu K.P."/>
            <person name="Choudhary V."/>
            <person name="Christoffels A."/>
            <person name="Clutterbuck D.R."/>
            <person name="Crowe M.L."/>
            <person name="Dalla E."/>
            <person name="Dalrymple B.P."/>
            <person name="de Bono B."/>
            <person name="Della Gatta G."/>
            <person name="di Bernardo D."/>
            <person name="Down T."/>
            <person name="Engstrom P."/>
            <person name="Fagiolini M."/>
            <person name="Faulkner G."/>
            <person name="Fletcher C.F."/>
            <person name="Fukushima T."/>
            <person name="Furuno M."/>
            <person name="Futaki S."/>
            <person name="Gariboldi M."/>
            <person name="Georgii-Hemming P."/>
            <person name="Gingeras T.R."/>
            <person name="Gojobori T."/>
            <person name="Green R.E."/>
            <person name="Gustincich S."/>
            <person name="Harbers M."/>
            <person name="Hayashi Y."/>
            <person name="Hensch T.K."/>
            <person name="Hirokawa N."/>
            <person name="Hill D."/>
            <person name="Huminiecki L."/>
            <person name="Iacono M."/>
            <person name="Ikeo K."/>
            <person name="Iwama A."/>
            <person name="Ishikawa T."/>
            <person name="Jakt M."/>
            <person name="Kanapin A."/>
            <person name="Katoh M."/>
            <person name="Kawasawa Y."/>
            <person name="Kelso J."/>
            <person name="Kitamura H."/>
            <person name="Kitano H."/>
            <person name="Kollias G."/>
            <person name="Krishnan S.P."/>
            <person name="Kruger A."/>
            <person name="Kummerfeld S.K."/>
            <person name="Kurochkin I.V."/>
            <person name="Lareau L.F."/>
            <person name="Lazarevic D."/>
            <person name="Lipovich L."/>
            <person name="Liu J."/>
            <person name="Liuni S."/>
            <person name="McWilliam S."/>
            <person name="Madan Babu M."/>
            <person name="Madera M."/>
            <person name="Marchionni L."/>
            <person name="Matsuda H."/>
            <person name="Matsuzawa S."/>
            <person name="Miki H."/>
            <person name="Mignone F."/>
            <person name="Miyake S."/>
            <person name="Morris K."/>
            <person name="Mottagui-Tabar S."/>
            <person name="Mulder N."/>
            <person name="Nakano N."/>
            <person name="Nakauchi H."/>
            <person name="Ng P."/>
            <person name="Nilsson R."/>
            <person name="Nishiguchi S."/>
            <person name="Nishikawa S."/>
            <person name="Nori F."/>
            <person name="Ohara O."/>
            <person name="Okazaki Y."/>
            <person name="Orlando V."/>
            <person name="Pang K.C."/>
            <person name="Pavan W.J."/>
            <person name="Pavesi G."/>
            <person name="Pesole G."/>
            <person name="Petrovsky N."/>
            <person name="Piazza S."/>
            <person name="Reed J."/>
            <person name="Reid J.F."/>
            <person name="Ring B.Z."/>
            <person name="Ringwald M."/>
            <person name="Rost B."/>
            <person name="Ruan Y."/>
            <person name="Salzberg S.L."/>
            <person name="Sandelin A."/>
            <person name="Schneider C."/>
            <person name="Schoenbach C."/>
            <person name="Sekiguchi K."/>
            <person name="Semple C.A."/>
            <person name="Seno S."/>
            <person name="Sessa L."/>
            <person name="Sheng Y."/>
            <person name="Shibata Y."/>
            <person name="Shimada H."/>
            <person name="Shimada K."/>
            <person name="Silva D."/>
            <person name="Sinclair B."/>
            <person name="Sperling S."/>
            <person name="Stupka E."/>
            <person name="Sugiura K."/>
            <person name="Sultana R."/>
            <person name="Takenaka Y."/>
            <person name="Taki K."/>
            <person name="Tammoja K."/>
            <person name="Tan S.L."/>
            <person name="Tang S."/>
            <person name="Taylor M.S."/>
            <person name="Tegner J."/>
            <person name="Teichmann S.A."/>
            <person name="Ueda H.R."/>
            <person name="van Nimwegen E."/>
            <person name="Verardo R."/>
            <person name="Wei C.L."/>
            <person name="Yagi K."/>
            <person name="Yamanishi H."/>
            <person name="Zabarovsky E."/>
            <person name="Zhu S."/>
            <person name="Zimmer A."/>
            <person name="Hide W."/>
            <person name="Bult C."/>
            <person name="Grimmond S.M."/>
            <person name="Teasdale R.D."/>
            <person name="Liu E.T."/>
            <person name="Brusic V."/>
            <person name="Quackenbush J."/>
            <person name="Wahlestedt C."/>
            <person name="Mattick J.S."/>
            <person name="Hume D.A."/>
            <person name="Kai C."/>
            <person name="Sasaki D."/>
            <person name="Tomaru Y."/>
            <person name="Fukuda S."/>
            <person name="Kanamori-Katayama M."/>
            <person name="Suzuki M."/>
            <person name="Aoki J."/>
            <person name="Arakawa T."/>
            <person name="Iida J."/>
            <person name="Imamura K."/>
            <person name="Itoh M."/>
            <person name="Kato T."/>
            <person name="Kawaji H."/>
            <person name="Kawagashira N."/>
            <person name="Kawashima T."/>
            <person name="Kojima M."/>
            <person name="Kondo S."/>
            <person name="Konno H."/>
            <person name="Nakano K."/>
            <person name="Ninomiya N."/>
            <person name="Nishio T."/>
            <person name="Okada M."/>
            <person name="Plessy C."/>
            <person name="Shibata K."/>
            <person name="Shiraki T."/>
            <person name="Suzuki S."/>
            <person name="Tagami M."/>
            <person name="Waki K."/>
            <person name="Watahiki A."/>
            <person name="Okamura-Oho Y."/>
            <person name="Suzuki H."/>
            <person name="Kawai J."/>
            <person name="Hayashizaki Y."/>
        </authorList>
    </citation>
    <scope>NUCLEOTIDE SEQUENCE [LARGE SCALE MRNA] (ISOFORM 1)</scope>
    <source>
        <strain>C57BL/6J</strain>
        <tissue>Stomach</tissue>
        <tissue>Tongue</tissue>
    </source>
</reference>
<reference key="4">
    <citation type="journal article" date="2004" name="Genome Res.">
        <title>The status, quality, and expansion of the NIH full-length cDNA project: the Mammalian Gene Collection (MGC).</title>
        <authorList>
            <consortium name="The MGC Project Team"/>
        </authorList>
    </citation>
    <scope>NUCLEOTIDE SEQUENCE [LARGE SCALE MRNA] (ISOFORM 1)</scope>
    <source>
        <tissue>Mammary tumor</tissue>
    </source>
</reference>
<reference key="5">
    <citation type="journal article" date="2010" name="Cell">
        <title>A tissue-specific atlas of mouse protein phosphorylation and expression.</title>
        <authorList>
            <person name="Huttlin E.L."/>
            <person name="Jedrychowski M.P."/>
            <person name="Elias J.E."/>
            <person name="Goswami T."/>
            <person name="Rad R."/>
            <person name="Beausoleil S.A."/>
            <person name="Villen J."/>
            <person name="Haas W."/>
            <person name="Sowa M.E."/>
            <person name="Gygi S.P."/>
        </authorList>
    </citation>
    <scope>PHOSPHORYLATION [LARGE SCALE ANALYSIS] AT SER-219</scope>
    <scope>IDENTIFICATION BY MASS SPECTROMETRY [LARGE SCALE ANALYSIS]</scope>
    <source>
        <tissue>Brain</tissue>
        <tissue>Lung</tissue>
        <tissue>Spleen</tissue>
        <tissue>Testis</tissue>
    </source>
</reference>
<reference key="6">
    <citation type="journal article" date="2013" name="Cell">
        <title>RNA-methylation-dependent RNA processing controls the speed of the circadian clock.</title>
        <authorList>
            <person name="Fustin J.M."/>
            <person name="Doi M."/>
            <person name="Yamaguchi Y."/>
            <person name="Hida H."/>
            <person name="Nishimura S."/>
            <person name="Yoshida M."/>
            <person name="Isagawa T."/>
            <person name="Morioka M.S."/>
            <person name="Kakeya H."/>
            <person name="Manabe I."/>
            <person name="Okamura H."/>
        </authorList>
    </citation>
    <scope>FUNCTION</scope>
    <scope>MUTAGENESIS OF 395-ASP--TRP-398</scope>
</reference>
<reference key="7">
    <citation type="journal article" date="2014" name="Cell Stem Cell">
        <title>m(6)A RNA modification controls cell fate transition in mammalian embryonic stem cells.</title>
        <authorList>
            <person name="Batista P.J."/>
            <person name="Molinie B."/>
            <person name="Wang J."/>
            <person name="Qu K."/>
            <person name="Zhang J."/>
            <person name="Li L."/>
            <person name="Bouley D.M."/>
            <person name="Lujan E."/>
            <person name="Haddad B."/>
            <person name="Daneshvar K."/>
            <person name="Carter A.C."/>
            <person name="Flynn R.A."/>
            <person name="Zhou C."/>
            <person name="Lim K.S."/>
            <person name="Dedon P."/>
            <person name="Wernig M."/>
            <person name="Mullen A.C."/>
            <person name="Xing Y."/>
            <person name="Giallourakis C.C."/>
            <person name="Chang H.Y."/>
        </authorList>
    </citation>
    <scope>FUNCTION</scope>
    <scope>DISRUPTION PHENOTYPE</scope>
</reference>
<reference key="8">
    <citation type="journal article" date="2014" name="Nat. Cell Biol.">
        <title>N-methyladenosine modification destabilizes developmental regulators in embryonic stem cells.</title>
        <authorList>
            <person name="Wang Y."/>
            <person name="Li Y."/>
            <person name="Toth J.I."/>
            <person name="Petroski M.D."/>
            <person name="Zhang Z."/>
            <person name="Zhao J.C."/>
        </authorList>
    </citation>
    <scope>FUNCTION</scope>
    <scope>CATALYTIC ACTIVITY</scope>
    <scope>SUBCELLULAR LOCATION</scope>
    <scope>INTERACTION WITH METTL14</scope>
</reference>
<reference key="9">
    <citation type="journal article" date="2015" name="Cell Stem Cell">
        <title>m(6)A RNA methylation is regulated by microRNAs and promotes reprogramming to pluripotency.</title>
        <authorList>
            <person name="Chen T."/>
            <person name="Hao Y.J."/>
            <person name="Zhang Y."/>
            <person name="Li M.M."/>
            <person name="Wang M."/>
            <person name="Han W."/>
            <person name="Wu Y."/>
            <person name="Lv Y."/>
            <person name="Hao J."/>
            <person name="Wang L."/>
            <person name="Li A."/>
            <person name="Yang Y."/>
            <person name="Jin K.X."/>
            <person name="Zhao X."/>
            <person name="Li Y."/>
            <person name="Ping X.L."/>
            <person name="Lai W.Y."/>
            <person name="Wu L.G."/>
            <person name="Jiang G."/>
            <person name="Wang H.L."/>
            <person name="Sang L."/>
            <person name="Wang X.J."/>
            <person name="Yang Y.G."/>
            <person name="Zhou Q."/>
        </authorList>
    </citation>
    <scope>FUNCTION</scope>
    <scope>SUBCELLULAR LOCATION</scope>
    <scope>ACTIVITY REGULATION</scope>
</reference>
<reference key="10">
    <citation type="journal article" date="2015" name="Science">
        <title>Stem cells. m6A mRNA methylation facilitates resolution of naive pluripotency toward differentiation.</title>
        <authorList>
            <person name="Geula S."/>
            <person name="Moshitch-Moshkovitz S."/>
            <person name="Dominissini D."/>
            <person name="Mansour A.A."/>
            <person name="Kol N."/>
            <person name="Salmon-Divon M."/>
            <person name="Hershkovitz V."/>
            <person name="Peer E."/>
            <person name="Mor N."/>
            <person name="Manor Y.S."/>
            <person name="Ben-Haim M.S."/>
            <person name="Eyal E."/>
            <person name="Yunger S."/>
            <person name="Pinto Y."/>
            <person name="Jaitin D.A."/>
            <person name="Viukov S."/>
            <person name="Rais Y."/>
            <person name="Krupalnik V."/>
            <person name="Chomsky E."/>
            <person name="Zerbib M."/>
            <person name="Maza I."/>
            <person name="Rechavi Y."/>
            <person name="Massarwa R."/>
            <person name="Hanna S."/>
            <person name="Amit I."/>
            <person name="Levanon E.Y."/>
            <person name="Amariglio N."/>
            <person name="Stern-Ginossar N."/>
            <person name="Novershtern N."/>
            <person name="Rechavi G."/>
            <person name="Hanna J.H."/>
        </authorList>
    </citation>
    <scope>FUNCTION</scope>
    <scope>DISRUPTION PHENOTYPE</scope>
</reference>
<reference key="11">
    <citation type="journal article" date="2017" name="Cell Res.">
        <title>Mettl3-mediated m(6)A regulates spermatogonial differentiation and meiosis initiation.</title>
        <authorList>
            <person name="Xu K."/>
            <person name="Yang Y."/>
            <person name="Feng G.H."/>
            <person name="Sun B.F."/>
            <person name="Chen J.Q."/>
            <person name="Li Y.F."/>
            <person name="Chen Y.S."/>
            <person name="Zhang X.X."/>
            <person name="Wang C.X."/>
            <person name="Jiang L.Y."/>
            <person name="Liu C."/>
            <person name="Zhang Z.Y."/>
            <person name="Wang X.J."/>
            <person name="Zhou Q."/>
            <person name="Yang Y.G."/>
            <person name="Li W."/>
        </authorList>
    </citation>
    <scope>FUNCTION</scope>
    <scope>DISRUPTION PHENOTYPE</scope>
    <scope>TISSUE SPECIFICITY</scope>
</reference>
<reference key="12">
    <citation type="journal article" date="2017" name="Cell">
        <title>Temporal control of mammalian cortical neurogenesis by m(6)A methylation.</title>
        <authorList>
            <person name="Yoon K.J."/>
            <person name="Ringeling F.R."/>
            <person name="Vissers C."/>
            <person name="Jacob F."/>
            <person name="Pokrass M."/>
            <person name="Jimenez-Cyrus D."/>
            <person name="Su Y."/>
            <person name="Kim N.S."/>
            <person name="Zhu Y."/>
            <person name="Zheng L."/>
            <person name="Kim S."/>
            <person name="Wang X."/>
            <person name="Dore L.C."/>
            <person name="Jin P."/>
            <person name="Regot S."/>
            <person name="Zhuang X."/>
            <person name="Canzar S."/>
            <person name="He C."/>
            <person name="Ming G.L."/>
            <person name="Song H."/>
        </authorList>
    </citation>
    <scope>FUNCTION</scope>
    <scope>DISRUPTION PHENOTYPE</scope>
</reference>
<reference key="13">
    <citation type="journal article" date="2017" name="Cell Res.">
        <title>Mettl3-/Mettl14-mediated mRNA N(6)-methyladenosine modulates murine spermatogenesis.</title>
        <authorList>
            <person name="Lin Z."/>
            <person name="Hsu P.J."/>
            <person name="Xing X."/>
            <person name="Fang J."/>
            <person name="Lu Z."/>
            <person name="Zou Q."/>
            <person name="Zhang K.J."/>
            <person name="Zhang X."/>
            <person name="Zhou Y."/>
            <person name="Zhang T."/>
            <person name="Zhang Y."/>
            <person name="Song W."/>
            <person name="Jia G."/>
            <person name="Yang X."/>
            <person name="He C."/>
            <person name="Tong M.H."/>
        </authorList>
    </citation>
    <scope>FUNCTION</scope>
    <scope>SUBCELLULAR LOCATION</scope>
    <scope>DISRUPTION PHENOTYPE</scope>
    <scope>TISSUE SPECIFICITY</scope>
</reference>
<reference key="14">
    <citation type="journal article" date="2017" name="Genes Dev.">
        <title>m(6)A mRNA modifications are deposited in nascent pre-mRNA and are not required for splicing but do specify cytoplasmic turnover.</title>
        <authorList>
            <person name="Ke S."/>
            <person name="Pandya-Jones A."/>
            <person name="Saito Y."/>
            <person name="Fak J.J."/>
            <person name="Vaagboe C.B."/>
            <person name="Geula S."/>
            <person name="Hanna J.H."/>
            <person name="Black D.L."/>
            <person name="Darnell J.E. Jr."/>
            <person name="Darnell R.B."/>
        </authorList>
    </citation>
    <scope>FUNCTION</scope>
</reference>
<reference key="15">
    <citation type="journal article" date="2017" name="Nature">
        <title>m(6)A mRNA methylation controls T cell homeostasis by targeting the IL-7/STAT5/SOCS pathways.</title>
        <authorList>
            <person name="Li H.B."/>
            <person name="Tong J."/>
            <person name="Zhu S."/>
            <person name="Batista P.J."/>
            <person name="Duffy E.E."/>
            <person name="Zhao J."/>
            <person name="Bailis W."/>
            <person name="Cao G."/>
            <person name="Kroehling L."/>
            <person name="Chen Y."/>
            <person name="Wang G."/>
            <person name="Broughton J.P."/>
            <person name="Chen Y.G."/>
            <person name="Kluger Y."/>
            <person name="Simon M.D."/>
            <person name="Chang H.Y."/>
            <person name="Yin Z."/>
            <person name="Flavell R.A."/>
        </authorList>
    </citation>
    <scope>FUNCTION</scope>
    <scope>DISRUPTION PHENOTYPE</scope>
    <scope>MUTAGENESIS OF 395-ASP--TRP-398</scope>
</reference>
<reference key="16">
    <citation type="journal article" date="2017" name="Nature">
        <title>m(6)A modulates haematopoietic stem and progenitor cell specification.</title>
        <authorList>
            <person name="Zhang C."/>
            <person name="Chen Y."/>
            <person name="Sun B."/>
            <person name="Wang L."/>
            <person name="Yang Y."/>
            <person name="Ma D."/>
            <person name="Lv J."/>
            <person name="Heng J."/>
            <person name="Ding Y."/>
            <person name="Xue Y."/>
            <person name="Lu X."/>
            <person name="Xiao W."/>
            <person name="Yang Y.G."/>
            <person name="Liu F."/>
        </authorList>
    </citation>
    <scope>FUNCTION</scope>
</reference>
<reference key="17">
    <citation type="journal article" date="2018" name="Genes Dev.">
        <title>Zc3h13/Flacc is required for adenosine methylation by bridging the mRNA-binding factor Rbm15/Spenito to the m6A machinery component Wtap/Fl(2)d.</title>
        <authorList>
            <person name="Knuckles P."/>
            <person name="Lence T."/>
            <person name="Haussmann I.U."/>
            <person name="Jacob D."/>
            <person name="Kreim N."/>
            <person name="Carl S.H."/>
            <person name="Masiello I."/>
            <person name="Hares T."/>
            <person name="Villasenor R."/>
            <person name="Hess D."/>
            <person name="Andrade-Navarro M.A."/>
            <person name="Biggiogera M."/>
            <person name="Helm M."/>
            <person name="Soller M."/>
            <person name="Buehler M."/>
            <person name="Roignant J.Y."/>
        </authorList>
    </citation>
    <scope>IDENTIFICATION IN THE WMM COMPLEX</scope>
</reference>
<reference key="18">
    <citation type="journal article" date="2018" name="Mol. Cell">
        <title>Zc3h13 regulates nuclear RNA m6A methylation and mouse embryonic stem cell self-renewal.</title>
        <authorList>
            <person name="Wen J."/>
            <person name="Lv R."/>
            <person name="Ma H."/>
            <person name="Shen H."/>
            <person name="He C."/>
            <person name="Wang J."/>
            <person name="Jiao F."/>
            <person name="Liu H."/>
            <person name="Yang P."/>
            <person name="Tan L."/>
            <person name="Lan F."/>
            <person name="Shi Y.G."/>
            <person name="He C."/>
            <person name="Shi Y."/>
            <person name="Diao J."/>
        </authorList>
    </citation>
    <scope>IDENTIFICATION IN THE WMM COMPLEX</scope>
    <scope>SUBCELLULAR LOCATION</scope>
</reference>
<reference key="19">
    <citation type="journal article" date="2020" name="Genes Dev.">
        <title>Context-dependent functional compensation between Ythdf m6A reader proteins.</title>
        <authorList>
            <person name="Lasman L."/>
            <person name="Krupalnik V."/>
            <person name="Viukov S."/>
            <person name="Mor N."/>
            <person name="Aguilera-Castrejon A."/>
            <person name="Schneir D."/>
            <person name="Bayerl J."/>
            <person name="Mizrahi O."/>
            <person name="Peles S."/>
            <person name="Tawil S."/>
            <person name="Sathe S."/>
            <person name="Nachshon A."/>
            <person name="Shani T."/>
            <person name="Zerbib M."/>
            <person name="Kilimnik I."/>
            <person name="Aigner S."/>
            <person name="Shankar A."/>
            <person name="Mueller J.R."/>
            <person name="Schwartz S."/>
            <person name="Stern-Ginossar N."/>
            <person name="Yeo G.W."/>
            <person name="Geula S."/>
            <person name="Novershtern N."/>
            <person name="Hanna J.H."/>
        </authorList>
    </citation>
    <scope>FUNCTION</scope>
</reference>
<keyword id="KW-0007">Acetylation</keyword>
<keyword id="KW-0025">Alternative splicing</keyword>
<keyword id="KW-0090">Biological rhythms</keyword>
<keyword id="KW-0963">Cytoplasm</keyword>
<keyword id="KW-0221">Differentiation</keyword>
<keyword id="KW-0227">DNA damage</keyword>
<keyword id="KW-0391">Immunity</keyword>
<keyword id="KW-0399">Innate immunity</keyword>
<keyword id="KW-1017">Isopeptide bond</keyword>
<keyword id="KW-0489">Methyltransferase</keyword>
<keyword id="KW-0539">Nucleus</keyword>
<keyword id="KW-0896">Oogenesis</keyword>
<keyword id="KW-0597">Phosphoprotein</keyword>
<keyword id="KW-1185">Reference proteome</keyword>
<keyword id="KW-0694">RNA-binding</keyword>
<keyword id="KW-0949">S-adenosyl-L-methionine</keyword>
<keyword id="KW-0744">Spermatogenesis</keyword>
<keyword id="KW-0808">Transferase</keyword>
<keyword id="KW-0832">Ubl conjugation</keyword>
<organism>
    <name type="scientific">Mus musculus</name>
    <name type="common">Mouse</name>
    <dbReference type="NCBI Taxonomy" id="10090"/>
    <lineage>
        <taxon>Eukaryota</taxon>
        <taxon>Metazoa</taxon>
        <taxon>Chordata</taxon>
        <taxon>Craniata</taxon>
        <taxon>Vertebrata</taxon>
        <taxon>Euteleostomi</taxon>
        <taxon>Mammalia</taxon>
        <taxon>Eutheria</taxon>
        <taxon>Euarchontoglires</taxon>
        <taxon>Glires</taxon>
        <taxon>Rodentia</taxon>
        <taxon>Myomorpha</taxon>
        <taxon>Muroidea</taxon>
        <taxon>Muridae</taxon>
        <taxon>Murinae</taxon>
        <taxon>Mus</taxon>
        <taxon>Mus</taxon>
    </lineage>
</organism>